<evidence type="ECO:0000255" key="1">
    <source>
        <dbReference type="HAMAP-Rule" id="MF_00237"/>
    </source>
</evidence>
<evidence type="ECO:0000256" key="2">
    <source>
        <dbReference type="SAM" id="MobiDB-lite"/>
    </source>
</evidence>
<organism>
    <name type="scientific">Vibrio cholerae serotype O1 (strain ATCC 39315 / El Tor Inaba N16961)</name>
    <dbReference type="NCBI Taxonomy" id="243277"/>
    <lineage>
        <taxon>Bacteria</taxon>
        <taxon>Pseudomonadati</taxon>
        <taxon>Pseudomonadota</taxon>
        <taxon>Gammaproteobacteria</taxon>
        <taxon>Vibrionales</taxon>
        <taxon>Vibrionaceae</taxon>
        <taxon>Vibrio</taxon>
    </lineage>
</organism>
<reference key="1">
    <citation type="journal article" date="2000" name="Nature">
        <title>DNA sequence of both chromosomes of the cholera pathogen Vibrio cholerae.</title>
        <authorList>
            <person name="Heidelberg J.F."/>
            <person name="Eisen J.A."/>
            <person name="Nelson W.C."/>
            <person name="Clayton R.A."/>
            <person name="Gwinn M.L."/>
            <person name="Dodson R.J."/>
            <person name="Haft D.H."/>
            <person name="Hickey E.K."/>
            <person name="Peterson J.D."/>
            <person name="Umayam L.A."/>
            <person name="Gill S.R."/>
            <person name="Nelson K.E."/>
            <person name="Read T.D."/>
            <person name="Tettelin H."/>
            <person name="Richardson D.L."/>
            <person name="Ermolaeva M.D."/>
            <person name="Vamathevan J.J."/>
            <person name="Bass S."/>
            <person name="Qin H."/>
            <person name="Dragoi I."/>
            <person name="Sellers P."/>
            <person name="McDonald L.A."/>
            <person name="Utterback T.R."/>
            <person name="Fleischmann R.D."/>
            <person name="Nierman W.C."/>
            <person name="White O."/>
            <person name="Salzberg S.L."/>
            <person name="Smith H.O."/>
            <person name="Colwell R.R."/>
            <person name="Mekalanos J.J."/>
            <person name="Venter J.C."/>
            <person name="Fraser C.M."/>
        </authorList>
    </citation>
    <scope>NUCLEOTIDE SEQUENCE [LARGE SCALE GENOMIC DNA]</scope>
    <source>
        <strain>ATCC 39315 / El Tor Inaba N16961</strain>
    </source>
</reference>
<protein>
    <recommendedName>
        <fullName evidence="1">Sec-independent protein translocase protein TatB</fullName>
    </recommendedName>
</protein>
<proteinExistence type="inferred from homology"/>
<accession>P57063</accession>
<comment type="function">
    <text evidence="1">Part of the twin-arginine translocation (Tat) system that transports large folded proteins containing a characteristic twin-arginine motif in their signal peptide across membranes. Together with TatC, TatB is part of a receptor directly interacting with Tat signal peptides. TatB may form an oligomeric binding site that transiently accommodates folded Tat precursor proteins before their translocation.</text>
</comment>
<comment type="subunit">
    <text evidence="1">The Tat system comprises two distinct complexes: a TatABC complex, containing multiple copies of TatA, TatB and TatC subunits, and a separate TatA complex, containing only TatA subunits. Substrates initially bind to the TatABC complex, which probably triggers association of the separate TatA complex to form the active translocon.</text>
</comment>
<comment type="subcellular location">
    <subcellularLocation>
        <location evidence="1">Cell inner membrane</location>
        <topology evidence="1">Single-pass membrane protein</topology>
    </subcellularLocation>
</comment>
<comment type="similarity">
    <text evidence="1">Belongs to the TatB family.</text>
</comment>
<keyword id="KW-0997">Cell inner membrane</keyword>
<keyword id="KW-1003">Cell membrane</keyword>
<keyword id="KW-0472">Membrane</keyword>
<keyword id="KW-0653">Protein transport</keyword>
<keyword id="KW-1185">Reference proteome</keyword>
<keyword id="KW-0811">Translocation</keyword>
<keyword id="KW-0812">Transmembrane</keyword>
<keyword id="KW-1133">Transmembrane helix</keyword>
<keyword id="KW-0813">Transport</keyword>
<dbReference type="EMBL" id="AE003852">
    <property type="protein sequence ID" value="AAF93265.1"/>
    <property type="molecule type" value="Genomic_DNA"/>
</dbReference>
<dbReference type="PIR" id="H82366">
    <property type="entry name" value="H82366"/>
</dbReference>
<dbReference type="RefSeq" id="NP_229746.1">
    <property type="nucleotide sequence ID" value="NC_002505.1"/>
</dbReference>
<dbReference type="RefSeq" id="WP_000459621.1">
    <property type="nucleotide sequence ID" value="NZ_LT906614.1"/>
</dbReference>
<dbReference type="SMR" id="P57063"/>
<dbReference type="STRING" id="243277.VC_0087"/>
<dbReference type="DNASU" id="2614483"/>
<dbReference type="EnsemblBacteria" id="AAF93265">
    <property type="protein sequence ID" value="AAF93265"/>
    <property type="gene ID" value="VC_0087"/>
</dbReference>
<dbReference type="GeneID" id="89513182"/>
<dbReference type="KEGG" id="vch:VC_0087"/>
<dbReference type="PATRIC" id="fig|243277.26.peg.84"/>
<dbReference type="eggNOG" id="COG1826">
    <property type="taxonomic scope" value="Bacteria"/>
</dbReference>
<dbReference type="HOGENOM" id="CLU_086034_1_1_6"/>
<dbReference type="PHI-base" id="PHI:2416"/>
<dbReference type="Proteomes" id="UP000000584">
    <property type="component" value="Chromosome 1"/>
</dbReference>
<dbReference type="GO" id="GO:0033281">
    <property type="term" value="C:TAT protein transport complex"/>
    <property type="evidence" value="ECO:0007669"/>
    <property type="project" value="UniProtKB-UniRule"/>
</dbReference>
<dbReference type="GO" id="GO:0008320">
    <property type="term" value="F:protein transmembrane transporter activity"/>
    <property type="evidence" value="ECO:0007669"/>
    <property type="project" value="UniProtKB-UniRule"/>
</dbReference>
<dbReference type="GO" id="GO:0043953">
    <property type="term" value="P:protein transport by the Tat complex"/>
    <property type="evidence" value="ECO:0007669"/>
    <property type="project" value="UniProtKB-UniRule"/>
</dbReference>
<dbReference type="Gene3D" id="1.20.5.3310">
    <property type="match status" value="1"/>
</dbReference>
<dbReference type="HAMAP" id="MF_00237">
    <property type="entry name" value="TatB"/>
    <property type="match status" value="1"/>
</dbReference>
<dbReference type="InterPro" id="IPR003369">
    <property type="entry name" value="TatA/B/E"/>
</dbReference>
<dbReference type="InterPro" id="IPR018448">
    <property type="entry name" value="TatB"/>
</dbReference>
<dbReference type="NCBIfam" id="TIGR01410">
    <property type="entry name" value="tatB"/>
    <property type="match status" value="1"/>
</dbReference>
<dbReference type="PANTHER" id="PTHR33162">
    <property type="entry name" value="SEC-INDEPENDENT PROTEIN TRANSLOCASE PROTEIN TATA, CHLOROPLASTIC"/>
    <property type="match status" value="1"/>
</dbReference>
<dbReference type="PANTHER" id="PTHR33162:SF1">
    <property type="entry name" value="SEC-INDEPENDENT PROTEIN TRANSLOCASE PROTEIN TATA, CHLOROPLASTIC"/>
    <property type="match status" value="1"/>
</dbReference>
<dbReference type="Pfam" id="PF02416">
    <property type="entry name" value="TatA_B_E"/>
    <property type="match status" value="1"/>
</dbReference>
<dbReference type="PRINTS" id="PR01506">
    <property type="entry name" value="TATBPROTEIN"/>
</dbReference>
<name>TATB_VIBCH</name>
<sequence>MFDIGFWELVLIAIVALVVLGPERLPHAIRSVAKFVSAAKSMANSVKDELAHELKVQELQENLRKAEQMGMQNLSPELQKSVESLKQAAQEVQRPYAATPSSEASSTSSNPSSATEPDVRLDSASQPAEKKAE</sequence>
<feature type="chain" id="PRO_0000192673" description="Sec-independent protein translocase protein TatB">
    <location>
        <begin position="1"/>
        <end position="133"/>
    </location>
</feature>
<feature type="transmembrane region" description="Helical" evidence="1">
    <location>
        <begin position="1"/>
        <end position="21"/>
    </location>
</feature>
<feature type="region of interest" description="Disordered" evidence="2">
    <location>
        <begin position="67"/>
        <end position="133"/>
    </location>
</feature>
<feature type="compositionally biased region" description="Polar residues" evidence="2">
    <location>
        <begin position="70"/>
        <end position="84"/>
    </location>
</feature>
<feature type="compositionally biased region" description="Low complexity" evidence="2">
    <location>
        <begin position="97"/>
        <end position="116"/>
    </location>
</feature>
<gene>
    <name evidence="1" type="primary">tatB</name>
    <name type="ordered locus">VC_0087</name>
</gene>